<evidence type="ECO:0000250" key="1"/>
<evidence type="ECO:0000305" key="2"/>
<sequence>MSATKSAGPTTLANHLDKEVKTDVLGAIDSDKLTEATQGDHKAINEEYKIWKKNSPYLYNVVIATVMDHPTLTVEWLPDLFDDITPGSMSARLMFGSHSSGLDKDYIHVASVELPTHLRPETIGLLSQQEGGTDMKQHHDAHGRHKRIAIVQSIYEDGEVNVARYNPLASKQIAAAHVTGDIHIFDRNNIMNSKEEAKPIYNLKHHTKEGWGLNWNINHADQLVSGAIDSTVAFWKIPEAASDGSCKDVTPHTVYHHDAAVNDVKFSYKMDFLIGSASDDCTLRLWDTRKPGNKAACTIKESRGINSLDFNPHSEFLVATGSADETVKVWDMRKMDTPISQLYSHCDEVTKVQWCPHQPSVLASGGHDRAILVWDIARLHDDLSSDENDEGPPELLFHHGGHSSRISDFDWHPTLPWVIASAAEDNVIQVWRMAESISNDEAVPADDVDMED</sequence>
<feature type="chain" id="PRO_0000227745" description="Histone acetyltransferase type B subunit 2">
    <location>
        <begin position="1"/>
        <end position="452"/>
    </location>
</feature>
<feature type="repeat" description="WD 1">
    <location>
        <begin position="155"/>
        <end position="195"/>
    </location>
</feature>
<feature type="repeat" description="WD 2">
    <location>
        <begin position="205"/>
        <end position="245"/>
    </location>
</feature>
<feature type="repeat" description="WD 3">
    <location>
        <begin position="256"/>
        <end position="296"/>
    </location>
</feature>
<feature type="repeat" description="WD 4">
    <location>
        <begin position="300"/>
        <end position="340"/>
    </location>
</feature>
<feature type="repeat" description="WD 5">
    <location>
        <begin position="344"/>
        <end position="384"/>
    </location>
</feature>
<feature type="repeat" description="WD 6">
    <location>
        <begin position="401"/>
        <end position="441"/>
    </location>
</feature>
<organism>
    <name type="scientific">Yarrowia lipolytica (strain CLIB 122 / E 150)</name>
    <name type="common">Yeast</name>
    <name type="synonym">Candida lipolytica</name>
    <dbReference type="NCBI Taxonomy" id="284591"/>
    <lineage>
        <taxon>Eukaryota</taxon>
        <taxon>Fungi</taxon>
        <taxon>Dikarya</taxon>
        <taxon>Ascomycota</taxon>
        <taxon>Saccharomycotina</taxon>
        <taxon>Dipodascomycetes</taxon>
        <taxon>Dipodascales</taxon>
        <taxon>Dipodascales incertae sedis</taxon>
        <taxon>Yarrowia</taxon>
    </lineage>
</organism>
<gene>
    <name type="primary">HAT2</name>
    <name type="ordered locus">YALI0D26279g</name>
</gene>
<dbReference type="EMBL" id="CR382130">
    <property type="protein sequence ID" value="CAG81514.1"/>
    <property type="molecule type" value="Genomic_DNA"/>
</dbReference>
<dbReference type="RefSeq" id="XP_503308.1">
    <property type="nucleotide sequence ID" value="XM_503308.1"/>
</dbReference>
<dbReference type="SMR" id="Q6C7Q4"/>
<dbReference type="STRING" id="284591.Q6C7Q4"/>
<dbReference type="EnsemblFungi" id="CAG81514">
    <property type="protein sequence ID" value="CAG81514"/>
    <property type="gene ID" value="YALI0_D26279g"/>
</dbReference>
<dbReference type="KEGG" id="yli:2910744"/>
<dbReference type="VEuPathDB" id="FungiDB:YALI0_D26279g"/>
<dbReference type="HOGENOM" id="CLU_020445_3_1_1"/>
<dbReference type="InParanoid" id="Q6C7Q4"/>
<dbReference type="OMA" id="CDIRTNQ"/>
<dbReference type="OrthoDB" id="116093at4891"/>
<dbReference type="Proteomes" id="UP000001300">
    <property type="component" value="Chromosome D"/>
</dbReference>
<dbReference type="GO" id="GO:0005737">
    <property type="term" value="C:cytoplasm"/>
    <property type="evidence" value="ECO:0000318"/>
    <property type="project" value="GO_Central"/>
</dbReference>
<dbReference type="GO" id="GO:0005634">
    <property type="term" value="C:nucleus"/>
    <property type="evidence" value="ECO:0000318"/>
    <property type="project" value="GO_Central"/>
</dbReference>
<dbReference type="GO" id="GO:0033698">
    <property type="term" value="C:Rpd3L complex"/>
    <property type="evidence" value="ECO:0000318"/>
    <property type="project" value="GO_Central"/>
</dbReference>
<dbReference type="GO" id="GO:0070210">
    <property type="term" value="C:Rpd3L-Expanded complex"/>
    <property type="evidence" value="ECO:0000318"/>
    <property type="project" value="GO_Central"/>
</dbReference>
<dbReference type="GO" id="GO:0042393">
    <property type="term" value="F:histone binding"/>
    <property type="evidence" value="ECO:0000318"/>
    <property type="project" value="GO_Central"/>
</dbReference>
<dbReference type="GO" id="GO:0006338">
    <property type="term" value="P:chromatin remodeling"/>
    <property type="evidence" value="ECO:0000318"/>
    <property type="project" value="GO_Central"/>
</dbReference>
<dbReference type="GO" id="GO:0006355">
    <property type="term" value="P:regulation of DNA-templated transcription"/>
    <property type="evidence" value="ECO:0000318"/>
    <property type="project" value="GO_Central"/>
</dbReference>
<dbReference type="Gene3D" id="2.130.10.10">
    <property type="entry name" value="YVTN repeat-like/Quinoprotein amine dehydrogenase"/>
    <property type="match status" value="1"/>
</dbReference>
<dbReference type="InterPro" id="IPR020472">
    <property type="entry name" value="G-protein_beta_WD-40_rep"/>
</dbReference>
<dbReference type="InterPro" id="IPR022052">
    <property type="entry name" value="Histone-bd_RBBP4-like_N"/>
</dbReference>
<dbReference type="InterPro" id="IPR015943">
    <property type="entry name" value="WD40/YVTN_repeat-like_dom_sf"/>
</dbReference>
<dbReference type="InterPro" id="IPR019775">
    <property type="entry name" value="WD40_repeat_CS"/>
</dbReference>
<dbReference type="InterPro" id="IPR036322">
    <property type="entry name" value="WD40_repeat_dom_sf"/>
</dbReference>
<dbReference type="InterPro" id="IPR001680">
    <property type="entry name" value="WD40_rpt"/>
</dbReference>
<dbReference type="InterPro" id="IPR050459">
    <property type="entry name" value="WD_repeat_RBAP46/RBAP48/MSI1"/>
</dbReference>
<dbReference type="PANTHER" id="PTHR22850">
    <property type="entry name" value="WD40 REPEAT FAMILY"/>
    <property type="match status" value="1"/>
</dbReference>
<dbReference type="Pfam" id="PF12265">
    <property type="entry name" value="CAF1C_H4-bd"/>
    <property type="match status" value="1"/>
</dbReference>
<dbReference type="Pfam" id="PF00400">
    <property type="entry name" value="WD40"/>
    <property type="match status" value="4"/>
</dbReference>
<dbReference type="PRINTS" id="PR00320">
    <property type="entry name" value="GPROTEINBRPT"/>
</dbReference>
<dbReference type="SMART" id="SM00320">
    <property type="entry name" value="WD40"/>
    <property type="match status" value="6"/>
</dbReference>
<dbReference type="SUPFAM" id="SSF50978">
    <property type="entry name" value="WD40 repeat-like"/>
    <property type="match status" value="1"/>
</dbReference>
<dbReference type="PROSITE" id="PS00678">
    <property type="entry name" value="WD_REPEATS_1"/>
    <property type="match status" value="3"/>
</dbReference>
<dbReference type="PROSITE" id="PS50082">
    <property type="entry name" value="WD_REPEATS_2"/>
    <property type="match status" value="4"/>
</dbReference>
<dbReference type="PROSITE" id="PS50294">
    <property type="entry name" value="WD_REPEATS_REGION"/>
    <property type="match status" value="1"/>
</dbReference>
<reference key="1">
    <citation type="journal article" date="2004" name="Nature">
        <title>Genome evolution in yeasts.</title>
        <authorList>
            <person name="Dujon B."/>
            <person name="Sherman D."/>
            <person name="Fischer G."/>
            <person name="Durrens P."/>
            <person name="Casaregola S."/>
            <person name="Lafontaine I."/>
            <person name="de Montigny J."/>
            <person name="Marck C."/>
            <person name="Neuveglise C."/>
            <person name="Talla E."/>
            <person name="Goffard N."/>
            <person name="Frangeul L."/>
            <person name="Aigle M."/>
            <person name="Anthouard V."/>
            <person name="Babour A."/>
            <person name="Barbe V."/>
            <person name="Barnay S."/>
            <person name="Blanchin S."/>
            <person name="Beckerich J.-M."/>
            <person name="Beyne E."/>
            <person name="Bleykasten C."/>
            <person name="Boisrame A."/>
            <person name="Boyer J."/>
            <person name="Cattolico L."/>
            <person name="Confanioleri F."/>
            <person name="de Daruvar A."/>
            <person name="Despons L."/>
            <person name="Fabre E."/>
            <person name="Fairhead C."/>
            <person name="Ferry-Dumazet H."/>
            <person name="Groppi A."/>
            <person name="Hantraye F."/>
            <person name="Hennequin C."/>
            <person name="Jauniaux N."/>
            <person name="Joyet P."/>
            <person name="Kachouri R."/>
            <person name="Kerrest A."/>
            <person name="Koszul R."/>
            <person name="Lemaire M."/>
            <person name="Lesur I."/>
            <person name="Ma L."/>
            <person name="Muller H."/>
            <person name="Nicaud J.-M."/>
            <person name="Nikolski M."/>
            <person name="Oztas S."/>
            <person name="Ozier-Kalogeropoulos O."/>
            <person name="Pellenz S."/>
            <person name="Potier S."/>
            <person name="Richard G.-F."/>
            <person name="Straub M.-L."/>
            <person name="Suleau A."/>
            <person name="Swennen D."/>
            <person name="Tekaia F."/>
            <person name="Wesolowski-Louvel M."/>
            <person name="Westhof E."/>
            <person name="Wirth B."/>
            <person name="Zeniou-Meyer M."/>
            <person name="Zivanovic Y."/>
            <person name="Bolotin-Fukuhara M."/>
            <person name="Thierry A."/>
            <person name="Bouchier C."/>
            <person name="Caudron B."/>
            <person name="Scarpelli C."/>
            <person name="Gaillardin C."/>
            <person name="Weissenbach J."/>
            <person name="Wincker P."/>
            <person name="Souciet J.-L."/>
        </authorList>
    </citation>
    <scope>NUCLEOTIDE SEQUENCE [LARGE SCALE GENOMIC DNA]</scope>
    <source>
        <strain>CLIB 122 / E 150</strain>
    </source>
</reference>
<comment type="function">
    <text evidence="1">Regulatory subunit of the histone acetylase B (HAT-B) complex. The complex acetylates 'Lys-12' of histone H4 which is required for telomeric silencing (By similarity).</text>
</comment>
<comment type="subunit">
    <text evidence="1">Component of the HAT-B complex composed of at least HAT1 and HAT2. The HAT-B complex binds to histone H4 tail (By similarity).</text>
</comment>
<comment type="subcellular location">
    <subcellularLocation>
        <location evidence="1">Cytoplasm</location>
    </subcellularLocation>
    <subcellularLocation>
        <location evidence="1">Nucleus</location>
    </subcellularLocation>
</comment>
<comment type="similarity">
    <text evidence="2">Belongs to the WD repeat RBAP46/RBAP48/MSI1 family.</text>
</comment>
<proteinExistence type="inferred from homology"/>
<protein>
    <recommendedName>
        <fullName>Histone acetyltransferase type B subunit 2</fullName>
    </recommendedName>
</protein>
<accession>Q6C7Q4</accession>
<keyword id="KW-0156">Chromatin regulator</keyword>
<keyword id="KW-0963">Cytoplasm</keyword>
<keyword id="KW-0539">Nucleus</keyword>
<keyword id="KW-1185">Reference proteome</keyword>
<keyword id="KW-0677">Repeat</keyword>
<keyword id="KW-0853">WD repeat</keyword>
<name>HAT2_YARLI</name>